<organism>
    <name type="scientific">Schizosaccharomyces pombe (strain 972 / ATCC 24843)</name>
    <name type="common">Fission yeast</name>
    <dbReference type="NCBI Taxonomy" id="284812"/>
    <lineage>
        <taxon>Eukaryota</taxon>
        <taxon>Fungi</taxon>
        <taxon>Dikarya</taxon>
        <taxon>Ascomycota</taxon>
        <taxon>Taphrinomycotina</taxon>
        <taxon>Schizosaccharomycetes</taxon>
        <taxon>Schizosaccharomycetales</taxon>
        <taxon>Schizosaccharomycetaceae</taxon>
        <taxon>Schizosaccharomyces</taxon>
    </lineage>
</organism>
<accession>Q9P378</accession>
<accession>P78853</accession>
<name>GAS1_SCHPO</name>
<feature type="signal peptide" evidence="3">
    <location>
        <begin position="1"/>
        <end position="19"/>
    </location>
</feature>
<feature type="chain" id="PRO_0000010491" description="1,3-beta-glucanosyltransferase gas1">
    <location>
        <begin position="20"/>
        <end position="516"/>
    </location>
</feature>
<feature type="propeptide" id="PRO_0000377426" description="Removed in mature form" evidence="3">
    <location>
        <begin position="517"/>
        <end position="542"/>
    </location>
</feature>
<feature type="region of interest" description="Disordered" evidence="4">
    <location>
        <begin position="490"/>
        <end position="515"/>
    </location>
</feature>
<feature type="active site" description="Proton donor" evidence="1">
    <location>
        <position position="157"/>
    </location>
</feature>
<feature type="active site" description="Nucleophile" evidence="1">
    <location>
        <position position="258"/>
    </location>
</feature>
<feature type="binding site" evidence="2">
    <location>
        <position position="88"/>
    </location>
    <ligand>
        <name>(1,3-beta-D-glucosyl)n</name>
        <dbReference type="ChEBI" id="CHEBI:37671"/>
        <label>1</label>
        <note>donor substrate</note>
    </ligand>
</feature>
<feature type="binding site" evidence="2">
    <location>
        <position position="156"/>
    </location>
    <ligand>
        <name>(1,3-beta-D-glucosyl)n</name>
        <dbReference type="ChEBI" id="CHEBI:37671"/>
        <label>1</label>
        <note>donor substrate</note>
    </ligand>
</feature>
<feature type="binding site" evidence="2">
    <location>
        <position position="157"/>
    </location>
    <ligand>
        <name>(1,3-beta-D-glucosyl)n</name>
        <dbReference type="ChEBI" id="CHEBI:37671"/>
        <label>2</label>
        <note>acceptor substrate</note>
    </ligand>
</feature>
<feature type="binding site" evidence="2">
    <location>
        <position position="198"/>
    </location>
    <ligand>
        <name>(1,3-beta-D-glucosyl)n</name>
        <dbReference type="ChEBI" id="CHEBI:37671"/>
        <label>2</label>
        <note>acceptor substrate</note>
    </ligand>
</feature>
<feature type="binding site" evidence="2">
    <location>
        <position position="203"/>
    </location>
    <ligand>
        <name>(1,3-beta-D-glucosyl)n</name>
        <dbReference type="ChEBI" id="CHEBI:37671"/>
        <label>2</label>
        <note>acceptor substrate</note>
    </ligand>
</feature>
<feature type="binding site" evidence="2">
    <location>
        <position position="290"/>
    </location>
    <ligand>
        <name>(1,3-beta-D-glucosyl)n</name>
        <dbReference type="ChEBI" id="CHEBI:37671"/>
        <label>1</label>
        <note>donor substrate</note>
    </ligand>
</feature>
<feature type="lipid moiety-binding region" description="GPI-anchor amidated serine" evidence="3">
    <location>
        <position position="516"/>
    </location>
</feature>
<feature type="glycosylation site" description="N-linked (GlcNAc...) asparagine" evidence="3">
    <location>
        <position position="35"/>
    </location>
</feature>
<feature type="glycosylation site" description="N-linked (GlcNAc...) asparagine" evidence="3">
    <location>
        <position position="91"/>
    </location>
</feature>
<feature type="glycosylation site" description="N-linked (GlcNAc...) asparagine" evidence="3">
    <location>
        <position position="161"/>
    </location>
</feature>
<feature type="glycosylation site" description="N-linked (GlcNAc...) asparagine" evidence="3">
    <location>
        <position position="249"/>
    </location>
</feature>
<feature type="glycosylation site" description="N-linked (GlcNAc...) asparagine" evidence="3">
    <location>
        <position position="279"/>
    </location>
</feature>
<feature type="glycosylation site" description="N-linked (GlcNAc...) asparagine" evidence="3">
    <location>
        <position position="406"/>
    </location>
</feature>
<feature type="glycosylation site" description="N-linked (GlcNAc...) asparagine" evidence="3">
    <location>
        <position position="484"/>
    </location>
</feature>
<feature type="glycosylation site" description="N-linked (GlcNAc...) asparagine" evidence="3">
    <location>
        <position position="502"/>
    </location>
</feature>
<feature type="glycosylation site" description="N-linked (GlcNAc...) asparagine" evidence="3">
    <location>
        <position position="509"/>
    </location>
</feature>
<feature type="disulfide bond" evidence="2">
    <location>
        <begin position="70"/>
        <end position="99"/>
    </location>
</feature>
<feature type="disulfide bond" evidence="2">
    <location>
        <begin position="212"/>
        <end position="345"/>
    </location>
</feature>
<feature type="disulfide bond" evidence="2">
    <location>
        <begin position="230"/>
        <end position="261"/>
    </location>
</feature>
<feature type="disulfide bond" evidence="2">
    <location>
        <begin position="367"/>
        <end position="419"/>
    </location>
</feature>
<feature type="disulfide bond" evidence="2">
    <location>
        <begin position="376"/>
        <end position="439"/>
    </location>
</feature>
<feature type="disulfide bond" evidence="2">
    <location>
        <begin position="395"/>
        <end position="400"/>
    </location>
</feature>
<feature type="sequence conflict" description="In Ref. 2." evidence="6" ref="2">
    <original>TFSEIVALFSD</original>
    <variation>HSLSLLPRSET</variation>
    <location>
        <begin position="268"/>
        <end position="278"/>
    </location>
</feature>
<feature type="sequence conflict" description="In Ref. 2; BAA13864." evidence="6" ref="2">
    <original>SGGIAYQYF</original>
    <variation>VWWHCLPIW</variation>
    <location>
        <begin position="285"/>
        <end position="293"/>
    </location>
</feature>
<sequence length="542" mass="58116">MKFSILSLAVAGLVGLAKASVSPVHVDGRYFFYENGTRFFLKGIAYQPNVDDSDTEGTLFVDPLSDGDACSRDVPYFQELSVNAIRVYAVNASLDHSACMQAFQDAGIYVLSDLAQPYEAISSSDPTWTVDLFSRYTEVVDSLAPYDNMLGFIAGNEVIQNNTNTNAAAFVKAAVRDVKSYIKSSGYRQIPVGYSTNDEEVTRDPMAYYFDCGDDDDHVDFYGINIYEWCGDSDFVSSGYQERTEEFSNMTVPMIFSEFGCIEVRPRTFSEIVALFSDNMTDVWSGGIAYQYFESENEYGVVTVSGDSVSTLTDFPYLSSRYASVIPSASYESTMSATLTATMSCQATNSAWMAATSLPPTPSEAVCECMDSTRSCVINDDVSSDDYSDLFSYVCNEISCDGITANGTYPGQYGSYSYCDAKQQLDYVLDAYYSAKGDCDFSGSATLVSASSATGTCASYLSAAGSSATNAISLTADSNAVSRNSSASTMSTSYTSGSGSSNSSGSSSNSSSKSSSGASSYNLNMVITFLSVVIGGTAVLFI</sequence>
<evidence type="ECO:0000250" key="1"/>
<evidence type="ECO:0000250" key="2">
    <source>
        <dbReference type="UniProtKB" id="Q06135"/>
    </source>
</evidence>
<evidence type="ECO:0000255" key="3"/>
<evidence type="ECO:0000256" key="4">
    <source>
        <dbReference type="SAM" id="MobiDB-lite"/>
    </source>
</evidence>
<evidence type="ECO:0000269" key="5">
    <source>
    </source>
</evidence>
<evidence type="ECO:0000305" key="6"/>
<proteinExistence type="evidence at protein level"/>
<keyword id="KW-0134">Cell wall</keyword>
<keyword id="KW-0961">Cell wall biogenesis/degradation</keyword>
<keyword id="KW-1015">Disulfide bond</keyword>
<keyword id="KW-0325">Glycoprotein</keyword>
<keyword id="KW-0336">GPI-anchor</keyword>
<keyword id="KW-0449">Lipoprotein</keyword>
<keyword id="KW-0472">Membrane</keyword>
<keyword id="KW-1185">Reference proteome</keyword>
<keyword id="KW-0964">Secreted</keyword>
<keyword id="KW-0732">Signal</keyword>
<keyword id="KW-0808">Transferase</keyword>
<comment type="function">
    <text evidence="1">Splits internally a 1,3-beta-glucan molecule and transfers the newly generated reducing end (the donor) to the non-reducing end of another 1,3-beta-glucan molecule (the acceptor) forming a 1,3-beta linkage, resulting in the elongation of 1,3-beta-glucan chains in the cell wall.</text>
</comment>
<comment type="subcellular location">
    <subcellularLocation>
        <location evidence="5">Secreted</location>
        <location evidence="5">Cell wall</location>
    </subcellularLocation>
    <subcellularLocation>
        <location evidence="5">Membrane</location>
        <topology evidence="5">Lipid-anchor</topology>
        <topology evidence="5">GPI-anchor</topology>
    </subcellularLocation>
    <text>Covalently-linked GPI-modified cell wall protein (GPI-CWP).</text>
</comment>
<comment type="PTM">
    <text>The GPI-anchor is attached to the protein in the endoplasmic reticulum and serves to target the protein to the cell surface. There, the glucosamine-inositol phospholipid moiety is cleaved off and the GPI-modified mannoprotein is covalently attached via its lipidless GPI glycan remnant to the 1,6-beta-glucan of the outer cell wall layer.</text>
</comment>
<comment type="similarity">
    <text evidence="6">Belongs to the glycosyl hydrolase 72 family.</text>
</comment>
<protein>
    <recommendedName>
        <fullName>1,3-beta-glucanosyltransferase gas1</fullName>
        <ecNumber>2.4.1.-</ecNumber>
    </recommendedName>
</protein>
<gene>
    <name type="primary">gas1</name>
    <name type="ORF">SPAC19B12.02c</name>
</gene>
<dbReference type="EC" id="2.4.1.-"/>
<dbReference type="EMBL" id="CU329670">
    <property type="protein sequence ID" value="CAC00550.1"/>
    <property type="molecule type" value="Genomic_DNA"/>
</dbReference>
<dbReference type="EMBL" id="D89203">
    <property type="protein sequence ID" value="BAA13864.1"/>
    <property type="molecule type" value="mRNA"/>
</dbReference>
<dbReference type="PIR" id="T43004">
    <property type="entry name" value="T43004"/>
</dbReference>
<dbReference type="RefSeq" id="NP_594765.1">
    <property type="nucleotide sequence ID" value="NM_001020192.2"/>
</dbReference>
<dbReference type="SMR" id="Q9P378"/>
<dbReference type="BioGRID" id="279039">
    <property type="interactions" value="3"/>
</dbReference>
<dbReference type="FunCoup" id="Q9P378">
    <property type="interactions" value="93"/>
</dbReference>
<dbReference type="STRING" id="284812.Q9P378"/>
<dbReference type="CAZy" id="CBM43">
    <property type="family name" value="Carbohydrate-Binding Module Family 43"/>
</dbReference>
<dbReference type="CAZy" id="GH72">
    <property type="family name" value="Glycoside Hydrolase Family 72"/>
</dbReference>
<dbReference type="GlyCosmos" id="Q9P378">
    <property type="glycosylation" value="9 sites, No reported glycans"/>
</dbReference>
<dbReference type="iPTMnet" id="Q9P378"/>
<dbReference type="PaxDb" id="4896-SPAC19B12.02c.1"/>
<dbReference type="EnsemblFungi" id="SPAC19B12.02c.1">
    <property type="protein sequence ID" value="SPAC19B12.02c.1:pep"/>
    <property type="gene ID" value="SPAC19B12.02c"/>
</dbReference>
<dbReference type="GeneID" id="2542584"/>
<dbReference type="KEGG" id="spo:2542584"/>
<dbReference type="PomBase" id="SPAC19B12.02c">
    <property type="gene designation" value="gas1"/>
</dbReference>
<dbReference type="VEuPathDB" id="FungiDB:SPAC19B12.02c"/>
<dbReference type="eggNOG" id="ENOG502QPST">
    <property type="taxonomic scope" value="Eukaryota"/>
</dbReference>
<dbReference type="HOGENOM" id="CLU_021855_2_1_1"/>
<dbReference type="InParanoid" id="Q9P378"/>
<dbReference type="OMA" id="QDHTECM"/>
<dbReference type="PhylomeDB" id="Q9P378"/>
<dbReference type="PRO" id="PR:Q9P378"/>
<dbReference type="Proteomes" id="UP000002485">
    <property type="component" value="Chromosome I"/>
</dbReference>
<dbReference type="GO" id="GO:0032153">
    <property type="term" value="C:cell division site"/>
    <property type="evidence" value="ECO:0000314"/>
    <property type="project" value="PomBase"/>
</dbReference>
<dbReference type="GO" id="GO:0071944">
    <property type="term" value="C:cell periphery"/>
    <property type="evidence" value="ECO:0000314"/>
    <property type="project" value="BHF-UCL"/>
</dbReference>
<dbReference type="GO" id="GO:0043188">
    <property type="term" value="C:cell septum edging"/>
    <property type="evidence" value="ECO:0000314"/>
    <property type="project" value="BHF-UCL"/>
</dbReference>
<dbReference type="GO" id="GO:0009897">
    <property type="term" value="C:external side of plasma membrane"/>
    <property type="evidence" value="ECO:0000304"/>
    <property type="project" value="PomBase"/>
</dbReference>
<dbReference type="GO" id="GO:0005576">
    <property type="term" value="C:extracellular region"/>
    <property type="evidence" value="ECO:0007669"/>
    <property type="project" value="UniProtKB-KW"/>
</dbReference>
<dbReference type="GO" id="GO:0009277">
    <property type="term" value="C:fungal-type cell wall"/>
    <property type="evidence" value="ECO:0000314"/>
    <property type="project" value="PomBase"/>
</dbReference>
<dbReference type="GO" id="GO:0035841">
    <property type="term" value="C:new growing cell tip"/>
    <property type="evidence" value="ECO:0000314"/>
    <property type="project" value="PomBase"/>
</dbReference>
<dbReference type="GO" id="GO:0035840">
    <property type="term" value="C:old growing cell tip"/>
    <property type="evidence" value="ECO:0000314"/>
    <property type="project" value="PomBase"/>
</dbReference>
<dbReference type="GO" id="GO:0000936">
    <property type="term" value="C:primary cell septum"/>
    <property type="evidence" value="ECO:0000314"/>
    <property type="project" value="BHF-UCL"/>
</dbReference>
<dbReference type="GO" id="GO:0030427">
    <property type="term" value="C:site of polarized growth"/>
    <property type="evidence" value="ECO:0000314"/>
    <property type="project" value="BHF-UCL"/>
</dbReference>
<dbReference type="GO" id="GO:0042124">
    <property type="term" value="F:1,3-beta-glucanosyltransferase activity"/>
    <property type="evidence" value="ECO:0000314"/>
    <property type="project" value="BHF-UCL"/>
</dbReference>
<dbReference type="GO" id="GO:0000902">
    <property type="term" value="P:cell morphogenesis"/>
    <property type="evidence" value="ECO:0000315"/>
    <property type="project" value="BHF-UCL"/>
</dbReference>
<dbReference type="GO" id="GO:0034407">
    <property type="term" value="P:cell wall (1-&gt;3)-beta-D-glucan metabolic process"/>
    <property type="evidence" value="ECO:0000315"/>
    <property type="project" value="BHF-UCL"/>
</dbReference>
<dbReference type="GO" id="GO:0000917">
    <property type="term" value="P:division septum assembly"/>
    <property type="evidence" value="ECO:0000315"/>
    <property type="project" value="BHF-UCL"/>
</dbReference>
<dbReference type="GO" id="GO:0007163">
    <property type="term" value="P:establishment or maintenance of cell polarity"/>
    <property type="evidence" value="ECO:0000315"/>
    <property type="project" value="BHF-UCL"/>
</dbReference>
<dbReference type="GO" id="GO:0071970">
    <property type="term" value="P:fungal-type cell wall (1-&gt;3)-beta-D-glucan biosynthetic process"/>
    <property type="evidence" value="ECO:0000314"/>
    <property type="project" value="PomBase"/>
</dbReference>
<dbReference type="GO" id="GO:0071940">
    <property type="term" value="P:fungal-type cell wall assembly"/>
    <property type="evidence" value="ECO:0000315"/>
    <property type="project" value="BHF-UCL"/>
</dbReference>
<dbReference type="GO" id="GO:0031505">
    <property type="term" value="P:fungal-type cell wall organization"/>
    <property type="evidence" value="ECO:0000318"/>
    <property type="project" value="GO_Central"/>
</dbReference>
<dbReference type="FunFam" id="3.20.20.80:FF:000038">
    <property type="entry name" value="1,3-beta-glucanosyltransferase"/>
    <property type="match status" value="1"/>
</dbReference>
<dbReference type="Gene3D" id="1.20.58.1040">
    <property type="match status" value="1"/>
</dbReference>
<dbReference type="Gene3D" id="3.20.20.80">
    <property type="entry name" value="Glycosidases"/>
    <property type="match status" value="1"/>
</dbReference>
<dbReference type="InterPro" id="IPR004886">
    <property type="entry name" value="Glucanosyltransferase"/>
</dbReference>
<dbReference type="InterPro" id="IPR017853">
    <property type="entry name" value="Glycoside_hydrolase_SF"/>
</dbReference>
<dbReference type="InterPro" id="IPR012946">
    <property type="entry name" value="X8"/>
</dbReference>
<dbReference type="PANTHER" id="PTHR31468">
    <property type="entry name" value="1,3-BETA-GLUCANOSYLTRANSFERASE GAS1"/>
    <property type="match status" value="1"/>
</dbReference>
<dbReference type="PANTHER" id="PTHR31468:SF2">
    <property type="entry name" value="1,3-BETA-GLUCANOSYLTRANSFERASE GAS1"/>
    <property type="match status" value="1"/>
</dbReference>
<dbReference type="Pfam" id="PF03198">
    <property type="entry name" value="Glyco_hydro_72"/>
    <property type="match status" value="1"/>
</dbReference>
<dbReference type="Pfam" id="PF07983">
    <property type="entry name" value="X8"/>
    <property type="match status" value="1"/>
</dbReference>
<dbReference type="SMART" id="SM00768">
    <property type="entry name" value="X8"/>
    <property type="match status" value="1"/>
</dbReference>
<dbReference type="SUPFAM" id="SSF51445">
    <property type="entry name" value="(Trans)glycosidases"/>
    <property type="match status" value="1"/>
</dbReference>
<reference key="1">
    <citation type="journal article" date="2002" name="Nature">
        <title>The genome sequence of Schizosaccharomyces pombe.</title>
        <authorList>
            <person name="Wood V."/>
            <person name="Gwilliam R."/>
            <person name="Rajandream M.A."/>
            <person name="Lyne M.H."/>
            <person name="Lyne R."/>
            <person name="Stewart A."/>
            <person name="Sgouros J.G."/>
            <person name="Peat N."/>
            <person name="Hayles J."/>
            <person name="Baker S.G."/>
            <person name="Basham D."/>
            <person name="Bowman S."/>
            <person name="Brooks K."/>
            <person name="Brown D."/>
            <person name="Brown S."/>
            <person name="Chillingworth T."/>
            <person name="Churcher C.M."/>
            <person name="Collins M."/>
            <person name="Connor R."/>
            <person name="Cronin A."/>
            <person name="Davis P."/>
            <person name="Feltwell T."/>
            <person name="Fraser A."/>
            <person name="Gentles S."/>
            <person name="Goble A."/>
            <person name="Hamlin N."/>
            <person name="Harris D.E."/>
            <person name="Hidalgo J."/>
            <person name="Hodgson G."/>
            <person name="Holroyd S."/>
            <person name="Hornsby T."/>
            <person name="Howarth S."/>
            <person name="Huckle E.J."/>
            <person name="Hunt S."/>
            <person name="Jagels K."/>
            <person name="James K.D."/>
            <person name="Jones L."/>
            <person name="Jones M."/>
            <person name="Leather S."/>
            <person name="McDonald S."/>
            <person name="McLean J."/>
            <person name="Mooney P."/>
            <person name="Moule S."/>
            <person name="Mungall K.L."/>
            <person name="Murphy L.D."/>
            <person name="Niblett D."/>
            <person name="Odell C."/>
            <person name="Oliver K."/>
            <person name="O'Neil S."/>
            <person name="Pearson D."/>
            <person name="Quail M.A."/>
            <person name="Rabbinowitsch E."/>
            <person name="Rutherford K.M."/>
            <person name="Rutter S."/>
            <person name="Saunders D."/>
            <person name="Seeger K."/>
            <person name="Sharp S."/>
            <person name="Skelton J."/>
            <person name="Simmonds M.N."/>
            <person name="Squares R."/>
            <person name="Squares S."/>
            <person name="Stevens K."/>
            <person name="Taylor K."/>
            <person name="Taylor R.G."/>
            <person name="Tivey A."/>
            <person name="Walsh S.V."/>
            <person name="Warren T."/>
            <person name="Whitehead S."/>
            <person name="Woodward J.R."/>
            <person name="Volckaert G."/>
            <person name="Aert R."/>
            <person name="Robben J."/>
            <person name="Grymonprez B."/>
            <person name="Weltjens I."/>
            <person name="Vanstreels E."/>
            <person name="Rieger M."/>
            <person name="Schaefer M."/>
            <person name="Mueller-Auer S."/>
            <person name="Gabel C."/>
            <person name="Fuchs M."/>
            <person name="Duesterhoeft A."/>
            <person name="Fritzc C."/>
            <person name="Holzer E."/>
            <person name="Moestl D."/>
            <person name="Hilbert H."/>
            <person name="Borzym K."/>
            <person name="Langer I."/>
            <person name="Beck A."/>
            <person name="Lehrach H."/>
            <person name="Reinhardt R."/>
            <person name="Pohl T.M."/>
            <person name="Eger P."/>
            <person name="Zimmermann W."/>
            <person name="Wedler H."/>
            <person name="Wambutt R."/>
            <person name="Purnelle B."/>
            <person name="Goffeau A."/>
            <person name="Cadieu E."/>
            <person name="Dreano S."/>
            <person name="Gloux S."/>
            <person name="Lelaure V."/>
            <person name="Mottier S."/>
            <person name="Galibert F."/>
            <person name="Aves S.J."/>
            <person name="Xiang Z."/>
            <person name="Hunt C."/>
            <person name="Moore K."/>
            <person name="Hurst S.M."/>
            <person name="Lucas M."/>
            <person name="Rochet M."/>
            <person name="Gaillardin C."/>
            <person name="Tallada V.A."/>
            <person name="Garzon A."/>
            <person name="Thode G."/>
            <person name="Daga R.R."/>
            <person name="Cruzado L."/>
            <person name="Jimenez J."/>
            <person name="Sanchez M."/>
            <person name="del Rey F."/>
            <person name="Benito J."/>
            <person name="Dominguez A."/>
            <person name="Revuelta J.L."/>
            <person name="Moreno S."/>
            <person name="Armstrong J."/>
            <person name="Forsburg S.L."/>
            <person name="Cerutti L."/>
            <person name="Lowe T."/>
            <person name="McCombie W.R."/>
            <person name="Paulsen I."/>
            <person name="Potashkin J."/>
            <person name="Shpakovski G.V."/>
            <person name="Ussery D."/>
            <person name="Barrell B.G."/>
            <person name="Nurse P."/>
        </authorList>
    </citation>
    <scope>NUCLEOTIDE SEQUENCE [LARGE SCALE GENOMIC DNA]</scope>
    <source>
        <strain>972 / ATCC 24843</strain>
    </source>
</reference>
<reference key="2">
    <citation type="journal article" date="1997" name="DNA Res.">
        <title>Identification of open reading frames in Schizosaccharomyces pombe cDNAs.</title>
        <authorList>
            <person name="Yoshioka S."/>
            <person name="Kato K."/>
            <person name="Nakai K."/>
            <person name="Okayama H."/>
            <person name="Nojima H."/>
        </authorList>
    </citation>
    <scope>NUCLEOTIDE SEQUENCE [LARGE SCALE MRNA] OF 268-542</scope>
    <source>
        <strain>PR745</strain>
    </source>
</reference>
<reference key="3">
    <citation type="journal article" date="2007" name="Yeast">
        <title>Mass spectrometric identification of covalently bound cell wall proteins from the fission yeast Schizosaccharomyces pombe.</title>
        <authorList>
            <person name="de Groot P.W.J."/>
            <person name="Yin Q.Y."/>
            <person name="Weig M."/>
            <person name="Sosinska G.J."/>
            <person name="Klis F.M."/>
            <person name="de Koster C.G."/>
        </authorList>
    </citation>
    <scope>SUBCELLULAR LOCATION</scope>
    <scope>IDENTIFICATION BY MASS SPECTROMETRY</scope>
    <scope>PROBABLE GPI-ANCHOR</scope>
</reference>